<reference key="1">
    <citation type="journal article" date="2005" name="J. Bacteriol.">
        <title>Insights on evolution of virulence and resistance from the complete genome analysis of an early methicillin-resistant Staphylococcus aureus strain and a biofilm-producing methicillin-resistant Staphylococcus epidermidis strain.</title>
        <authorList>
            <person name="Gill S.R."/>
            <person name="Fouts D.E."/>
            <person name="Archer G.L."/>
            <person name="Mongodin E.F."/>
            <person name="DeBoy R.T."/>
            <person name="Ravel J."/>
            <person name="Paulsen I.T."/>
            <person name="Kolonay J.F."/>
            <person name="Brinkac L.M."/>
            <person name="Beanan M.J."/>
            <person name="Dodson R.J."/>
            <person name="Daugherty S.C."/>
            <person name="Madupu R."/>
            <person name="Angiuoli S.V."/>
            <person name="Durkin A.S."/>
            <person name="Haft D.H."/>
            <person name="Vamathevan J.J."/>
            <person name="Khouri H."/>
            <person name="Utterback T.R."/>
            <person name="Lee C."/>
            <person name="Dimitrov G."/>
            <person name="Jiang L."/>
            <person name="Qin H."/>
            <person name="Weidman J."/>
            <person name="Tran K."/>
            <person name="Kang K.H."/>
            <person name="Hance I.R."/>
            <person name="Nelson K.E."/>
            <person name="Fraser C.M."/>
        </authorList>
    </citation>
    <scope>NUCLEOTIDE SEQUENCE [LARGE SCALE GENOMIC DNA]</scope>
    <source>
        <strain>ATCC 35984 / DSM 28319 / BCRC 17069 / CCUG 31568 / BM 3577 / RP62A</strain>
    </source>
</reference>
<evidence type="ECO:0000255" key="1">
    <source>
        <dbReference type="HAMAP-Rule" id="MF_00168"/>
    </source>
</evidence>
<name>TGT_STAEQ</name>
<dbReference type="EC" id="2.4.2.29" evidence="1"/>
<dbReference type="EMBL" id="CP000029">
    <property type="protein sequence ID" value="AAW54588.1"/>
    <property type="molecule type" value="Genomic_DNA"/>
</dbReference>
<dbReference type="RefSeq" id="WP_001830840.1">
    <property type="nucleotide sequence ID" value="NC_002976.3"/>
</dbReference>
<dbReference type="SMR" id="Q5HNR2"/>
<dbReference type="STRING" id="176279.SERP1203"/>
<dbReference type="GeneID" id="50018563"/>
<dbReference type="KEGG" id="ser:SERP1203"/>
<dbReference type="eggNOG" id="COG0343">
    <property type="taxonomic scope" value="Bacteria"/>
</dbReference>
<dbReference type="HOGENOM" id="CLU_022060_0_1_9"/>
<dbReference type="UniPathway" id="UPA00392"/>
<dbReference type="Proteomes" id="UP000000531">
    <property type="component" value="Chromosome"/>
</dbReference>
<dbReference type="GO" id="GO:0005829">
    <property type="term" value="C:cytosol"/>
    <property type="evidence" value="ECO:0007669"/>
    <property type="project" value="TreeGrafter"/>
</dbReference>
<dbReference type="GO" id="GO:0046872">
    <property type="term" value="F:metal ion binding"/>
    <property type="evidence" value="ECO:0007669"/>
    <property type="project" value="UniProtKB-KW"/>
</dbReference>
<dbReference type="GO" id="GO:0008479">
    <property type="term" value="F:tRNA-guanosine(34) queuine transglycosylase activity"/>
    <property type="evidence" value="ECO:0007669"/>
    <property type="project" value="UniProtKB-UniRule"/>
</dbReference>
<dbReference type="GO" id="GO:0008616">
    <property type="term" value="P:queuosine biosynthetic process"/>
    <property type="evidence" value="ECO:0007669"/>
    <property type="project" value="UniProtKB-UniRule"/>
</dbReference>
<dbReference type="GO" id="GO:0002099">
    <property type="term" value="P:tRNA wobble guanine modification"/>
    <property type="evidence" value="ECO:0007669"/>
    <property type="project" value="TreeGrafter"/>
</dbReference>
<dbReference type="GO" id="GO:0101030">
    <property type="term" value="P:tRNA-guanine transglycosylation"/>
    <property type="evidence" value="ECO:0007669"/>
    <property type="project" value="InterPro"/>
</dbReference>
<dbReference type="FunFam" id="3.20.20.105:FF:000001">
    <property type="entry name" value="Queuine tRNA-ribosyltransferase"/>
    <property type="match status" value="1"/>
</dbReference>
<dbReference type="Gene3D" id="3.20.20.105">
    <property type="entry name" value="Queuine tRNA-ribosyltransferase-like"/>
    <property type="match status" value="1"/>
</dbReference>
<dbReference type="HAMAP" id="MF_00168">
    <property type="entry name" value="Q_tRNA_Tgt"/>
    <property type="match status" value="1"/>
</dbReference>
<dbReference type="InterPro" id="IPR050076">
    <property type="entry name" value="ArchSynthase1/Queuine_TRR"/>
</dbReference>
<dbReference type="InterPro" id="IPR004803">
    <property type="entry name" value="TGT"/>
</dbReference>
<dbReference type="InterPro" id="IPR036511">
    <property type="entry name" value="TGT-like_sf"/>
</dbReference>
<dbReference type="InterPro" id="IPR002616">
    <property type="entry name" value="tRNA_ribo_trans-like"/>
</dbReference>
<dbReference type="NCBIfam" id="TIGR00430">
    <property type="entry name" value="Q_tRNA_tgt"/>
    <property type="match status" value="1"/>
</dbReference>
<dbReference type="NCBIfam" id="TIGR00449">
    <property type="entry name" value="tgt_general"/>
    <property type="match status" value="1"/>
</dbReference>
<dbReference type="PANTHER" id="PTHR46499">
    <property type="entry name" value="QUEUINE TRNA-RIBOSYLTRANSFERASE"/>
    <property type="match status" value="1"/>
</dbReference>
<dbReference type="PANTHER" id="PTHR46499:SF1">
    <property type="entry name" value="QUEUINE TRNA-RIBOSYLTRANSFERASE"/>
    <property type="match status" value="1"/>
</dbReference>
<dbReference type="Pfam" id="PF01702">
    <property type="entry name" value="TGT"/>
    <property type="match status" value="1"/>
</dbReference>
<dbReference type="SUPFAM" id="SSF51713">
    <property type="entry name" value="tRNA-guanine transglycosylase"/>
    <property type="match status" value="1"/>
</dbReference>
<keyword id="KW-0328">Glycosyltransferase</keyword>
<keyword id="KW-0479">Metal-binding</keyword>
<keyword id="KW-0671">Queuosine biosynthesis</keyword>
<keyword id="KW-1185">Reference proteome</keyword>
<keyword id="KW-0808">Transferase</keyword>
<keyword id="KW-0819">tRNA processing</keyword>
<keyword id="KW-0862">Zinc</keyword>
<protein>
    <recommendedName>
        <fullName evidence="1">Queuine tRNA-ribosyltransferase</fullName>
        <ecNumber evidence="1">2.4.2.29</ecNumber>
    </recommendedName>
    <alternativeName>
        <fullName evidence="1">Guanine insertion enzyme</fullName>
    </alternativeName>
    <alternativeName>
        <fullName evidence="1">tRNA-guanine transglycosylase</fullName>
    </alternativeName>
</protein>
<accession>Q5HNR2</accession>
<gene>
    <name evidence="1" type="primary">tgt</name>
    <name type="ordered locus">SERP1203</name>
</gene>
<proteinExistence type="inferred from homology"/>
<comment type="function">
    <text evidence="1">Catalyzes the base-exchange of a guanine (G) residue with the queuine precursor 7-aminomethyl-7-deazaguanine (PreQ1) at position 34 (anticodon wobble position) in tRNAs with GU(N) anticodons (tRNA-Asp, -Asn, -His and -Tyr). Catalysis occurs through a double-displacement mechanism. The nucleophile active site attacks the C1' of nucleotide 34 to detach the guanine base from the RNA, forming a covalent enzyme-RNA intermediate. The proton acceptor active site deprotonates the incoming PreQ1, allowing a nucleophilic attack on the C1' of the ribose to form the product. After dissociation, two additional enzymatic reactions on the tRNA convert PreQ1 to queuine (Q), resulting in the hypermodified nucleoside queuosine (7-(((4,5-cis-dihydroxy-2-cyclopenten-1-yl)amino)methyl)-7-deazaguanosine).</text>
</comment>
<comment type="catalytic activity">
    <reaction evidence="1">
        <text>7-aminomethyl-7-carbaguanine + guanosine(34) in tRNA = 7-aminomethyl-7-carbaguanosine(34) in tRNA + guanine</text>
        <dbReference type="Rhea" id="RHEA:24104"/>
        <dbReference type="Rhea" id="RHEA-COMP:10341"/>
        <dbReference type="Rhea" id="RHEA-COMP:10342"/>
        <dbReference type="ChEBI" id="CHEBI:16235"/>
        <dbReference type="ChEBI" id="CHEBI:58703"/>
        <dbReference type="ChEBI" id="CHEBI:74269"/>
        <dbReference type="ChEBI" id="CHEBI:82833"/>
        <dbReference type="EC" id="2.4.2.29"/>
    </reaction>
</comment>
<comment type="cofactor">
    <cofactor evidence="1">
        <name>Zn(2+)</name>
        <dbReference type="ChEBI" id="CHEBI:29105"/>
    </cofactor>
    <text evidence="1">Binds 1 zinc ion per subunit.</text>
</comment>
<comment type="pathway">
    <text evidence="1">tRNA modification; tRNA-queuosine biosynthesis.</text>
</comment>
<comment type="subunit">
    <text evidence="1">Homodimer. Within each dimer, one monomer is responsible for RNA recognition and catalysis, while the other monomer binds to the replacement base PreQ1.</text>
</comment>
<comment type="similarity">
    <text evidence="1">Belongs to the queuine tRNA-ribosyltransferase family.</text>
</comment>
<sequence length="379" mass="43121">MPAVTYEHIKTCKQSGARLGIVHTPHGSFETPMFMPVGTKATVKTMSPEELRNIEAKIILGNTYHLWLQPGNDIIKHAGGLHKFMNWDGPILTDSGGFQVFSLSNLRKISEEGVEFRHHTNGSKLFLSPEKSMQIQNDLGSDIMMAFDECPPMPAEYDYVKDSIERTTRWAARCLKAHQRPGDQALFGIIQGGEYKDLREQSAKELVSLDFPGYAIGGLSVGEPKPVMYDMVEHTEQFMPKDKPRYLMGVGSPDALIECSIRGMDMFDCVLPTRIARNGTCMTSNGRLVVKNAKYADDLRPLDEQCDCYTCQHYTRAYIRHLVKAEETFGIRLTTIHNLHFLLKLMEDIRQAIREDRLLDFKDEFFEQYGLNVENPKNF</sequence>
<feature type="chain" id="PRO_0000135529" description="Queuine tRNA-ribosyltransferase">
    <location>
        <begin position="1"/>
        <end position="379"/>
    </location>
</feature>
<feature type="region of interest" description="RNA binding" evidence="1">
    <location>
        <begin position="249"/>
        <end position="255"/>
    </location>
</feature>
<feature type="region of interest" description="RNA binding; important for wobble base 34 recognition" evidence="1">
    <location>
        <begin position="273"/>
        <end position="277"/>
    </location>
</feature>
<feature type="active site" description="Proton acceptor" evidence="1">
    <location>
        <position position="94"/>
    </location>
</feature>
<feature type="active site" description="Nucleophile" evidence="1">
    <location>
        <position position="268"/>
    </location>
</feature>
<feature type="binding site" evidence="1">
    <location>
        <begin position="94"/>
        <end position="98"/>
    </location>
    <ligand>
        <name>substrate</name>
    </ligand>
</feature>
<feature type="binding site" evidence="1">
    <location>
        <position position="148"/>
    </location>
    <ligand>
        <name>substrate</name>
    </ligand>
</feature>
<feature type="binding site" evidence="1">
    <location>
        <position position="191"/>
    </location>
    <ligand>
        <name>substrate</name>
    </ligand>
</feature>
<feature type="binding site" evidence="1">
    <location>
        <position position="218"/>
    </location>
    <ligand>
        <name>substrate</name>
    </ligand>
</feature>
<feature type="binding site" evidence="1">
    <location>
        <position position="306"/>
    </location>
    <ligand>
        <name>Zn(2+)</name>
        <dbReference type="ChEBI" id="CHEBI:29105"/>
    </ligand>
</feature>
<feature type="binding site" evidence="1">
    <location>
        <position position="308"/>
    </location>
    <ligand>
        <name>Zn(2+)</name>
        <dbReference type="ChEBI" id="CHEBI:29105"/>
    </ligand>
</feature>
<feature type="binding site" evidence="1">
    <location>
        <position position="311"/>
    </location>
    <ligand>
        <name>Zn(2+)</name>
        <dbReference type="ChEBI" id="CHEBI:29105"/>
    </ligand>
</feature>
<feature type="binding site" evidence="1">
    <location>
        <position position="337"/>
    </location>
    <ligand>
        <name>Zn(2+)</name>
        <dbReference type="ChEBI" id="CHEBI:29105"/>
    </ligand>
</feature>
<organism>
    <name type="scientific">Staphylococcus epidermidis (strain ATCC 35984 / DSM 28319 / BCRC 17069 / CCUG 31568 / BM 3577 / RP62A)</name>
    <dbReference type="NCBI Taxonomy" id="176279"/>
    <lineage>
        <taxon>Bacteria</taxon>
        <taxon>Bacillati</taxon>
        <taxon>Bacillota</taxon>
        <taxon>Bacilli</taxon>
        <taxon>Bacillales</taxon>
        <taxon>Staphylococcaceae</taxon>
        <taxon>Staphylococcus</taxon>
    </lineage>
</organism>